<keyword id="KW-0004">4Fe-4S</keyword>
<keyword id="KW-0963">Cytoplasm</keyword>
<keyword id="KW-1015">Disulfide bond</keyword>
<keyword id="KW-0408">Iron</keyword>
<keyword id="KW-0411">Iron-sulfur</keyword>
<keyword id="KW-0479">Metal-binding</keyword>
<keyword id="KW-0489">Methyltransferase</keyword>
<keyword id="KW-0698">rRNA processing</keyword>
<keyword id="KW-0949">S-adenosyl-L-methionine</keyword>
<keyword id="KW-0808">Transferase</keyword>
<keyword id="KW-0819">tRNA processing</keyword>
<sequence>MAGETIVNLLDLDAEGLVAYCGSLGEKAFRAKQLQRWIHQYNAADFDGMTDLAKSLREKLKGRAVIGTPDILSDHVSADGTRKWLINVGNGNAVETVFIPEETRGTLCVSSQAGCAVNCRFCSTGKQGFSRNLSTGEIVGQLRMAEFALRASLGRAPGPNGKAERVITNVVMMGMGEPLLNYSAVVPAMRLMLDDNAYGLSRRRVTLSTSGVVPMMDRLGAELPVALAVSLHAPNDALRDELVPLNKKHPLRELMAACQRYLKVAPRDFITFEYCMLDGVNDTEAHARELLAVTRDVPCKFNLIPFNPFPESGLVRSKTEQIKRFAQVLIDAGVVTTIRKTRGDDIDAACGQLAGAVKDRTRLAERTGASKIIEVRAV</sequence>
<name>RLMN_BURMS</name>
<dbReference type="EC" id="2.1.1.192" evidence="1"/>
<dbReference type="EMBL" id="CP000526">
    <property type="protein sequence ID" value="ABM51966.1"/>
    <property type="molecule type" value="Genomic_DNA"/>
</dbReference>
<dbReference type="RefSeq" id="WP_004192451.1">
    <property type="nucleotide sequence ID" value="NC_008785.1"/>
</dbReference>
<dbReference type="SMR" id="A1V4K3"/>
<dbReference type="GeneID" id="93060478"/>
<dbReference type="KEGG" id="bmv:BMASAVP1_A1837"/>
<dbReference type="HOGENOM" id="CLU_029101_0_0_4"/>
<dbReference type="GO" id="GO:0005737">
    <property type="term" value="C:cytoplasm"/>
    <property type="evidence" value="ECO:0007669"/>
    <property type="project" value="UniProtKB-SubCell"/>
</dbReference>
<dbReference type="GO" id="GO:0051539">
    <property type="term" value="F:4 iron, 4 sulfur cluster binding"/>
    <property type="evidence" value="ECO:0007669"/>
    <property type="project" value="UniProtKB-UniRule"/>
</dbReference>
<dbReference type="GO" id="GO:0046872">
    <property type="term" value="F:metal ion binding"/>
    <property type="evidence" value="ECO:0007669"/>
    <property type="project" value="UniProtKB-KW"/>
</dbReference>
<dbReference type="GO" id="GO:0070040">
    <property type="term" value="F:rRNA (adenine(2503)-C2-)-methyltransferase activity"/>
    <property type="evidence" value="ECO:0007669"/>
    <property type="project" value="UniProtKB-UniRule"/>
</dbReference>
<dbReference type="GO" id="GO:0019843">
    <property type="term" value="F:rRNA binding"/>
    <property type="evidence" value="ECO:0007669"/>
    <property type="project" value="UniProtKB-UniRule"/>
</dbReference>
<dbReference type="GO" id="GO:0002935">
    <property type="term" value="F:tRNA (adenine(37)-C2)-methyltransferase activity"/>
    <property type="evidence" value="ECO:0007669"/>
    <property type="project" value="UniProtKB-UniRule"/>
</dbReference>
<dbReference type="GO" id="GO:0000049">
    <property type="term" value="F:tRNA binding"/>
    <property type="evidence" value="ECO:0007669"/>
    <property type="project" value="UniProtKB-UniRule"/>
</dbReference>
<dbReference type="GO" id="GO:0070475">
    <property type="term" value="P:rRNA base methylation"/>
    <property type="evidence" value="ECO:0007669"/>
    <property type="project" value="UniProtKB-UniRule"/>
</dbReference>
<dbReference type="GO" id="GO:0030488">
    <property type="term" value="P:tRNA methylation"/>
    <property type="evidence" value="ECO:0007669"/>
    <property type="project" value="UniProtKB-UniRule"/>
</dbReference>
<dbReference type="CDD" id="cd01335">
    <property type="entry name" value="Radical_SAM"/>
    <property type="match status" value="1"/>
</dbReference>
<dbReference type="FunFam" id="1.10.150.530:FF:000003">
    <property type="entry name" value="Dual-specificity RNA methyltransferase RlmN"/>
    <property type="match status" value="1"/>
</dbReference>
<dbReference type="FunFam" id="3.20.20.70:FF:000008">
    <property type="entry name" value="Dual-specificity RNA methyltransferase RlmN"/>
    <property type="match status" value="1"/>
</dbReference>
<dbReference type="Gene3D" id="1.10.150.530">
    <property type="match status" value="1"/>
</dbReference>
<dbReference type="Gene3D" id="3.20.20.70">
    <property type="entry name" value="Aldolase class I"/>
    <property type="match status" value="1"/>
</dbReference>
<dbReference type="HAMAP" id="MF_01849">
    <property type="entry name" value="RNA_methyltr_RlmN"/>
    <property type="match status" value="1"/>
</dbReference>
<dbReference type="InterPro" id="IPR013785">
    <property type="entry name" value="Aldolase_TIM"/>
</dbReference>
<dbReference type="InterPro" id="IPR040072">
    <property type="entry name" value="Methyltransferase_A"/>
</dbReference>
<dbReference type="InterPro" id="IPR048641">
    <property type="entry name" value="RlmN_N"/>
</dbReference>
<dbReference type="InterPro" id="IPR027492">
    <property type="entry name" value="RNA_MTrfase_RlmN"/>
</dbReference>
<dbReference type="InterPro" id="IPR004383">
    <property type="entry name" value="rRNA_lsu_MTrfase_RlmN/Cfr"/>
</dbReference>
<dbReference type="InterPro" id="IPR007197">
    <property type="entry name" value="rSAM"/>
</dbReference>
<dbReference type="NCBIfam" id="TIGR00048">
    <property type="entry name" value="rRNA_mod_RlmN"/>
    <property type="match status" value="1"/>
</dbReference>
<dbReference type="PANTHER" id="PTHR30544">
    <property type="entry name" value="23S RRNA METHYLTRANSFERASE"/>
    <property type="match status" value="1"/>
</dbReference>
<dbReference type="PANTHER" id="PTHR30544:SF5">
    <property type="entry name" value="RADICAL SAM CORE DOMAIN-CONTAINING PROTEIN"/>
    <property type="match status" value="1"/>
</dbReference>
<dbReference type="Pfam" id="PF04055">
    <property type="entry name" value="Radical_SAM"/>
    <property type="match status" value="1"/>
</dbReference>
<dbReference type="Pfam" id="PF21016">
    <property type="entry name" value="RlmN_N"/>
    <property type="match status" value="1"/>
</dbReference>
<dbReference type="PIRSF" id="PIRSF006004">
    <property type="entry name" value="CHP00048"/>
    <property type="match status" value="1"/>
</dbReference>
<dbReference type="SFLD" id="SFLDF00275">
    <property type="entry name" value="adenosine_C2_methyltransferase"/>
    <property type="match status" value="1"/>
</dbReference>
<dbReference type="SFLD" id="SFLDG01062">
    <property type="entry name" value="methyltransferase_(Class_A)"/>
    <property type="match status" value="1"/>
</dbReference>
<dbReference type="SUPFAM" id="SSF102114">
    <property type="entry name" value="Radical SAM enzymes"/>
    <property type="match status" value="1"/>
</dbReference>
<dbReference type="PROSITE" id="PS51918">
    <property type="entry name" value="RADICAL_SAM"/>
    <property type="match status" value="1"/>
</dbReference>
<proteinExistence type="inferred from homology"/>
<evidence type="ECO:0000255" key="1">
    <source>
        <dbReference type="HAMAP-Rule" id="MF_01849"/>
    </source>
</evidence>
<evidence type="ECO:0000255" key="2">
    <source>
        <dbReference type="PROSITE-ProRule" id="PRU01266"/>
    </source>
</evidence>
<gene>
    <name evidence="1" type="primary">rlmN</name>
    <name type="ordered locus">BMASAVP1_A1837</name>
</gene>
<organism>
    <name type="scientific">Burkholderia mallei (strain SAVP1)</name>
    <dbReference type="NCBI Taxonomy" id="320388"/>
    <lineage>
        <taxon>Bacteria</taxon>
        <taxon>Pseudomonadati</taxon>
        <taxon>Pseudomonadota</taxon>
        <taxon>Betaproteobacteria</taxon>
        <taxon>Burkholderiales</taxon>
        <taxon>Burkholderiaceae</taxon>
        <taxon>Burkholderia</taxon>
        <taxon>pseudomallei group</taxon>
    </lineage>
</organism>
<feature type="chain" id="PRO_0000350078" description="Dual-specificity RNA methyltransferase RlmN">
    <location>
        <begin position="1"/>
        <end position="378"/>
    </location>
</feature>
<feature type="domain" description="Radical SAM core" evidence="2">
    <location>
        <begin position="101"/>
        <end position="345"/>
    </location>
</feature>
<feature type="active site" description="Proton acceptor" evidence="1">
    <location>
        <position position="95"/>
    </location>
</feature>
<feature type="active site" description="S-methylcysteine intermediate" evidence="1">
    <location>
        <position position="350"/>
    </location>
</feature>
<feature type="binding site" evidence="1">
    <location>
        <position position="115"/>
    </location>
    <ligand>
        <name>[4Fe-4S] cluster</name>
        <dbReference type="ChEBI" id="CHEBI:49883"/>
        <note>4Fe-4S-S-AdoMet</note>
    </ligand>
</feature>
<feature type="binding site" evidence="1">
    <location>
        <position position="119"/>
    </location>
    <ligand>
        <name>[4Fe-4S] cluster</name>
        <dbReference type="ChEBI" id="CHEBI:49883"/>
        <note>4Fe-4S-S-AdoMet</note>
    </ligand>
</feature>
<feature type="binding site" evidence="1">
    <location>
        <position position="122"/>
    </location>
    <ligand>
        <name>[4Fe-4S] cluster</name>
        <dbReference type="ChEBI" id="CHEBI:49883"/>
        <note>4Fe-4S-S-AdoMet</note>
    </ligand>
</feature>
<feature type="binding site" evidence="1">
    <location>
        <begin position="176"/>
        <end position="177"/>
    </location>
    <ligand>
        <name>S-adenosyl-L-methionine</name>
        <dbReference type="ChEBI" id="CHEBI:59789"/>
    </ligand>
</feature>
<feature type="binding site" evidence="1">
    <location>
        <position position="208"/>
    </location>
    <ligand>
        <name>S-adenosyl-L-methionine</name>
        <dbReference type="ChEBI" id="CHEBI:59789"/>
    </ligand>
</feature>
<feature type="binding site" evidence="1">
    <location>
        <begin position="230"/>
        <end position="232"/>
    </location>
    <ligand>
        <name>S-adenosyl-L-methionine</name>
        <dbReference type="ChEBI" id="CHEBI:59789"/>
    </ligand>
</feature>
<feature type="binding site" evidence="1">
    <location>
        <position position="307"/>
    </location>
    <ligand>
        <name>S-adenosyl-L-methionine</name>
        <dbReference type="ChEBI" id="CHEBI:59789"/>
    </ligand>
</feature>
<feature type="disulfide bond" description="(transient)" evidence="1">
    <location>
        <begin position="108"/>
        <end position="350"/>
    </location>
</feature>
<protein>
    <recommendedName>
        <fullName evidence="1">Dual-specificity RNA methyltransferase RlmN</fullName>
        <ecNumber evidence="1">2.1.1.192</ecNumber>
    </recommendedName>
    <alternativeName>
        <fullName evidence="1">23S rRNA (adenine(2503)-C(2))-methyltransferase</fullName>
    </alternativeName>
    <alternativeName>
        <fullName evidence="1">23S rRNA m2A2503 methyltransferase</fullName>
    </alternativeName>
    <alternativeName>
        <fullName evidence="1">Ribosomal RNA large subunit methyltransferase N</fullName>
    </alternativeName>
    <alternativeName>
        <fullName evidence="1">tRNA (adenine(37)-C(2))-methyltransferase</fullName>
    </alternativeName>
    <alternativeName>
        <fullName evidence="1">tRNA m2A37 methyltransferase</fullName>
    </alternativeName>
</protein>
<comment type="function">
    <text evidence="1">Specifically methylates position 2 of adenine 2503 in 23S rRNA and position 2 of adenine 37 in tRNAs. m2A2503 modification seems to play a crucial role in the proofreading step occurring at the peptidyl transferase center and thus would serve to optimize ribosomal fidelity.</text>
</comment>
<comment type="catalytic activity">
    <reaction evidence="1">
        <text>adenosine(2503) in 23S rRNA + 2 reduced [2Fe-2S]-[ferredoxin] + 2 S-adenosyl-L-methionine = 2-methyladenosine(2503) in 23S rRNA + 5'-deoxyadenosine + L-methionine + 2 oxidized [2Fe-2S]-[ferredoxin] + S-adenosyl-L-homocysteine</text>
        <dbReference type="Rhea" id="RHEA:42916"/>
        <dbReference type="Rhea" id="RHEA-COMP:10000"/>
        <dbReference type="Rhea" id="RHEA-COMP:10001"/>
        <dbReference type="Rhea" id="RHEA-COMP:10152"/>
        <dbReference type="Rhea" id="RHEA-COMP:10282"/>
        <dbReference type="ChEBI" id="CHEBI:17319"/>
        <dbReference type="ChEBI" id="CHEBI:33737"/>
        <dbReference type="ChEBI" id="CHEBI:33738"/>
        <dbReference type="ChEBI" id="CHEBI:57844"/>
        <dbReference type="ChEBI" id="CHEBI:57856"/>
        <dbReference type="ChEBI" id="CHEBI:59789"/>
        <dbReference type="ChEBI" id="CHEBI:74411"/>
        <dbReference type="ChEBI" id="CHEBI:74497"/>
        <dbReference type="EC" id="2.1.1.192"/>
    </reaction>
</comment>
<comment type="catalytic activity">
    <reaction evidence="1">
        <text>adenosine(37) in tRNA + 2 reduced [2Fe-2S]-[ferredoxin] + 2 S-adenosyl-L-methionine = 2-methyladenosine(37) in tRNA + 5'-deoxyadenosine + L-methionine + 2 oxidized [2Fe-2S]-[ferredoxin] + S-adenosyl-L-homocysteine</text>
        <dbReference type="Rhea" id="RHEA:43332"/>
        <dbReference type="Rhea" id="RHEA-COMP:10000"/>
        <dbReference type="Rhea" id="RHEA-COMP:10001"/>
        <dbReference type="Rhea" id="RHEA-COMP:10162"/>
        <dbReference type="Rhea" id="RHEA-COMP:10485"/>
        <dbReference type="ChEBI" id="CHEBI:17319"/>
        <dbReference type="ChEBI" id="CHEBI:33737"/>
        <dbReference type="ChEBI" id="CHEBI:33738"/>
        <dbReference type="ChEBI" id="CHEBI:57844"/>
        <dbReference type="ChEBI" id="CHEBI:57856"/>
        <dbReference type="ChEBI" id="CHEBI:59789"/>
        <dbReference type="ChEBI" id="CHEBI:74411"/>
        <dbReference type="ChEBI" id="CHEBI:74497"/>
        <dbReference type="EC" id="2.1.1.192"/>
    </reaction>
</comment>
<comment type="cofactor">
    <cofactor evidence="1">
        <name>[4Fe-4S] cluster</name>
        <dbReference type="ChEBI" id="CHEBI:49883"/>
    </cofactor>
    <text evidence="1">Binds 1 [4Fe-4S] cluster. The cluster is coordinated with 3 cysteines and an exchangeable S-adenosyl-L-methionine.</text>
</comment>
<comment type="subcellular location">
    <subcellularLocation>
        <location evidence="1">Cytoplasm</location>
    </subcellularLocation>
</comment>
<comment type="miscellaneous">
    <text evidence="1">Reaction proceeds by a ping-pong mechanism involving intermediate methylation of a conserved cysteine residue.</text>
</comment>
<comment type="similarity">
    <text evidence="1">Belongs to the radical SAM superfamily. RlmN family.</text>
</comment>
<accession>A1V4K3</accession>
<reference key="1">
    <citation type="journal article" date="2010" name="Genome Biol. Evol.">
        <title>Continuing evolution of Burkholderia mallei through genome reduction and large-scale rearrangements.</title>
        <authorList>
            <person name="Losada L."/>
            <person name="Ronning C.M."/>
            <person name="DeShazer D."/>
            <person name="Woods D."/>
            <person name="Fedorova N."/>
            <person name="Kim H.S."/>
            <person name="Shabalina S.A."/>
            <person name="Pearson T.R."/>
            <person name="Brinkac L."/>
            <person name="Tan P."/>
            <person name="Nandi T."/>
            <person name="Crabtree J."/>
            <person name="Badger J."/>
            <person name="Beckstrom-Sternberg S."/>
            <person name="Saqib M."/>
            <person name="Schutzer S.E."/>
            <person name="Keim P."/>
            <person name="Nierman W.C."/>
        </authorList>
    </citation>
    <scope>NUCLEOTIDE SEQUENCE [LARGE SCALE GENOMIC DNA]</scope>
    <source>
        <strain>SAVP1</strain>
    </source>
</reference>